<comment type="function">
    <text evidence="1">Protein modifier that is covalently attached to lysine residues of substrate proteins, thereby targeting them for proteasomal degradation. The tagging system is termed pupylation.</text>
</comment>
<comment type="pathway">
    <text evidence="1">Protein degradation; proteasomal Pup-dependent pathway.</text>
</comment>
<comment type="subunit">
    <text evidence="1">Strongly interacts with the proteasome-associated ATPase ARC through a hydrophobic interface; the interacting region of Pup lies in its C-terminal half. There is one Pup binding site per ARC hexamer ring.</text>
</comment>
<comment type="domain">
    <text evidence="1">The N-terminal unstructured half of Pup provides a signal required to initiate unfolding and degradation by the proteasome but is not needed for pupylation, while the C-terminal helical half of Pup interacts with ARC to target proteins to the proteasome.</text>
</comment>
<comment type="PTM">
    <text evidence="1">Is modified by deamidation of its C-terminal glutamine to glutamate by the deamidase Dop, a prerequisite to the subsequent pupylation process.</text>
</comment>
<comment type="similarity">
    <text evidence="1">Belongs to the prokaryotic ubiquitin-like protein family.</text>
</comment>
<organism>
    <name type="scientific">Mycobacterium ulcerans (strain Agy99)</name>
    <dbReference type="NCBI Taxonomy" id="362242"/>
    <lineage>
        <taxon>Bacteria</taxon>
        <taxon>Bacillati</taxon>
        <taxon>Actinomycetota</taxon>
        <taxon>Actinomycetes</taxon>
        <taxon>Mycobacteriales</taxon>
        <taxon>Mycobacteriaceae</taxon>
        <taxon>Mycobacterium</taxon>
        <taxon>Mycobacterium ulcerans group</taxon>
    </lineage>
</organism>
<protein>
    <recommendedName>
        <fullName evidence="1">Prokaryotic ubiquitin-like protein Pup</fullName>
    </recommendedName>
    <alternativeName>
        <fullName evidence="1">Bacterial ubiquitin-like modifier</fullName>
    </alternativeName>
</protein>
<reference key="1">
    <citation type="journal article" date="2007" name="Genome Res.">
        <title>Reductive evolution and niche adaptation inferred from the genome of Mycobacterium ulcerans, the causative agent of Buruli ulcer.</title>
        <authorList>
            <person name="Stinear T.P."/>
            <person name="Seemann T."/>
            <person name="Pidot S."/>
            <person name="Frigui W."/>
            <person name="Reysset G."/>
            <person name="Garnier T."/>
            <person name="Meurice G."/>
            <person name="Simon D."/>
            <person name="Bouchier C."/>
            <person name="Ma L."/>
            <person name="Tichit M."/>
            <person name="Porter J.L."/>
            <person name="Ryan J."/>
            <person name="Johnson P.D.R."/>
            <person name="Davies J.K."/>
            <person name="Jenkin G.A."/>
            <person name="Small P.L.C."/>
            <person name="Jones L.M."/>
            <person name="Tekaia F."/>
            <person name="Laval F."/>
            <person name="Daffe M."/>
            <person name="Parkhill J."/>
            <person name="Cole S.T."/>
        </authorList>
    </citation>
    <scope>NUCLEOTIDE SEQUENCE [LARGE SCALE GENOMIC DNA]</scope>
    <source>
        <strain>Agy99</strain>
    </source>
</reference>
<sequence>MAQEQTKRGGGGGDDEDVTGTTAAGQERRKKLAQDTDDLLDEIDDVLEENAEDFVRAYVQKGGQ</sequence>
<evidence type="ECO:0000255" key="1">
    <source>
        <dbReference type="HAMAP-Rule" id="MF_02106"/>
    </source>
</evidence>
<evidence type="ECO:0000256" key="2">
    <source>
        <dbReference type="SAM" id="MobiDB-lite"/>
    </source>
</evidence>
<feature type="chain" id="PRO_0000390599" description="Prokaryotic ubiquitin-like protein Pup">
    <location>
        <begin position="1"/>
        <end position="64"/>
    </location>
</feature>
<feature type="region of interest" description="Disordered" evidence="2">
    <location>
        <begin position="1"/>
        <end position="36"/>
    </location>
</feature>
<feature type="region of interest" description="ARC ATPase binding" evidence="1">
    <location>
        <begin position="21"/>
        <end position="58"/>
    </location>
</feature>
<feature type="coiled-coil region" evidence="1">
    <location>
        <begin position="26"/>
        <end position="52"/>
    </location>
</feature>
<feature type="modified residue" description="Deamidated glutamine" evidence="1">
    <location>
        <position position="64"/>
    </location>
</feature>
<feature type="cross-link" description="Isoglutamyl lysine isopeptide (Gln-Lys) (interchain with K-? in acceptor proteins)" evidence="1">
    <location>
        <position position="64"/>
    </location>
</feature>
<keyword id="KW-0175">Coiled coil</keyword>
<keyword id="KW-1017">Isopeptide bond</keyword>
<keyword id="KW-0833">Ubl conjugation pathway</keyword>
<gene>
    <name evidence="1" type="primary">pup</name>
    <name type="ordered locus">MUL_2332</name>
</gene>
<proteinExistence type="inferred from homology"/>
<accession>A0PQT4</accession>
<dbReference type="EMBL" id="CP000325">
    <property type="protein sequence ID" value="ABL04703.1"/>
    <property type="molecule type" value="Genomic_DNA"/>
</dbReference>
<dbReference type="RefSeq" id="WP_011740319.1">
    <property type="nucleotide sequence ID" value="NC_008611.1"/>
</dbReference>
<dbReference type="SMR" id="A0PQT4"/>
<dbReference type="KEGG" id="mul:MUL_2332"/>
<dbReference type="eggNOG" id="ENOG50333JS">
    <property type="taxonomic scope" value="Bacteria"/>
</dbReference>
<dbReference type="HOGENOM" id="CLU_183816_1_0_11"/>
<dbReference type="UniPathway" id="UPA00997"/>
<dbReference type="Proteomes" id="UP000000765">
    <property type="component" value="Chromosome"/>
</dbReference>
<dbReference type="GO" id="GO:0070628">
    <property type="term" value="F:proteasome binding"/>
    <property type="evidence" value="ECO:0007669"/>
    <property type="project" value="UniProtKB-UniRule"/>
</dbReference>
<dbReference type="GO" id="GO:0031386">
    <property type="term" value="F:protein tag activity"/>
    <property type="evidence" value="ECO:0007669"/>
    <property type="project" value="UniProtKB-UniRule"/>
</dbReference>
<dbReference type="GO" id="GO:0019941">
    <property type="term" value="P:modification-dependent protein catabolic process"/>
    <property type="evidence" value="ECO:0007669"/>
    <property type="project" value="UniProtKB-UniRule"/>
</dbReference>
<dbReference type="GO" id="GO:0010498">
    <property type="term" value="P:proteasomal protein catabolic process"/>
    <property type="evidence" value="ECO:0007669"/>
    <property type="project" value="UniProtKB-UniRule"/>
</dbReference>
<dbReference type="GO" id="GO:0070490">
    <property type="term" value="P:protein pupylation"/>
    <property type="evidence" value="ECO:0007669"/>
    <property type="project" value="UniProtKB-UniRule"/>
</dbReference>
<dbReference type="HAMAP" id="MF_02106">
    <property type="entry name" value="Pup"/>
    <property type="match status" value="1"/>
</dbReference>
<dbReference type="InterPro" id="IPR008515">
    <property type="entry name" value="Ubiquitin-like_Pup"/>
</dbReference>
<dbReference type="NCBIfam" id="TIGR03687">
    <property type="entry name" value="pupylate_cterm"/>
    <property type="match status" value="1"/>
</dbReference>
<dbReference type="Pfam" id="PF05639">
    <property type="entry name" value="Pup"/>
    <property type="match status" value="1"/>
</dbReference>
<name>PUP_MYCUA</name>